<proteinExistence type="inferred from homology"/>
<dbReference type="EMBL" id="FM180568">
    <property type="protein sequence ID" value="CAS09866.1"/>
    <property type="molecule type" value="Genomic_DNA"/>
</dbReference>
<dbReference type="RefSeq" id="WP_001136827.1">
    <property type="nucleotide sequence ID" value="NC_011601.1"/>
</dbReference>
<dbReference type="SMR" id="B7UFI8"/>
<dbReference type="GeneID" id="93775010"/>
<dbReference type="KEGG" id="ecg:E2348C_2318"/>
<dbReference type="HOGENOM" id="CLU_074944_2_0_6"/>
<dbReference type="Proteomes" id="UP000008205">
    <property type="component" value="Chromosome"/>
</dbReference>
<dbReference type="GO" id="GO:0005829">
    <property type="term" value="C:cytosol"/>
    <property type="evidence" value="ECO:0007669"/>
    <property type="project" value="UniProtKB-ARBA"/>
</dbReference>
<dbReference type="GO" id="GO:0003746">
    <property type="term" value="F:translation elongation factor activity"/>
    <property type="evidence" value="ECO:0007669"/>
    <property type="project" value="UniProtKB-UniRule"/>
</dbReference>
<dbReference type="GO" id="GO:0043043">
    <property type="term" value="P:peptide biosynthetic process"/>
    <property type="evidence" value="ECO:0007669"/>
    <property type="project" value="InterPro"/>
</dbReference>
<dbReference type="CDD" id="cd04470">
    <property type="entry name" value="S1_EF-P_repeat_1"/>
    <property type="match status" value="1"/>
</dbReference>
<dbReference type="CDD" id="cd05794">
    <property type="entry name" value="S1_EF-P_repeat_2"/>
    <property type="match status" value="1"/>
</dbReference>
<dbReference type="FunFam" id="2.40.50.140:FF:000004">
    <property type="entry name" value="Elongation factor P"/>
    <property type="match status" value="1"/>
</dbReference>
<dbReference type="FunFam" id="2.30.30.30:FF:000011">
    <property type="entry name" value="Elongation factor P-like protein"/>
    <property type="match status" value="1"/>
</dbReference>
<dbReference type="FunFam" id="2.40.50.140:FF:000053">
    <property type="entry name" value="Elongation factor P-like protein"/>
    <property type="match status" value="1"/>
</dbReference>
<dbReference type="Gene3D" id="2.30.30.30">
    <property type="match status" value="1"/>
</dbReference>
<dbReference type="Gene3D" id="2.40.50.140">
    <property type="entry name" value="Nucleic acid-binding proteins"/>
    <property type="match status" value="2"/>
</dbReference>
<dbReference type="HAMAP" id="MF_00646">
    <property type="entry name" value="EFP"/>
    <property type="match status" value="1"/>
</dbReference>
<dbReference type="InterPro" id="IPR015365">
    <property type="entry name" value="Elong-fact-P_C"/>
</dbReference>
<dbReference type="InterPro" id="IPR012340">
    <property type="entry name" value="NA-bd_OB-fold"/>
</dbReference>
<dbReference type="InterPro" id="IPR014722">
    <property type="entry name" value="Rib_uL2_dom2"/>
</dbReference>
<dbReference type="InterPro" id="IPR020599">
    <property type="entry name" value="Transl_elong_fac_P/YeiP"/>
</dbReference>
<dbReference type="InterPro" id="IPR013185">
    <property type="entry name" value="Transl_elong_KOW-like"/>
</dbReference>
<dbReference type="InterPro" id="IPR011897">
    <property type="entry name" value="Transl_elong_p-like_YeiP"/>
</dbReference>
<dbReference type="InterPro" id="IPR001059">
    <property type="entry name" value="Transl_elong_P/YeiP_cen"/>
</dbReference>
<dbReference type="InterPro" id="IPR013852">
    <property type="entry name" value="Transl_elong_P/YeiP_CS"/>
</dbReference>
<dbReference type="InterPro" id="IPR008991">
    <property type="entry name" value="Translation_prot_SH3-like_sf"/>
</dbReference>
<dbReference type="NCBIfam" id="NF001810">
    <property type="entry name" value="PRK00529.1"/>
    <property type="match status" value="1"/>
</dbReference>
<dbReference type="NCBIfam" id="NF003392">
    <property type="entry name" value="PRK04542.1"/>
    <property type="match status" value="1"/>
</dbReference>
<dbReference type="NCBIfam" id="TIGR02178">
    <property type="entry name" value="yeiP"/>
    <property type="match status" value="1"/>
</dbReference>
<dbReference type="PANTHER" id="PTHR30053">
    <property type="entry name" value="ELONGATION FACTOR P"/>
    <property type="match status" value="1"/>
</dbReference>
<dbReference type="PANTHER" id="PTHR30053:SF14">
    <property type="entry name" value="TRANSLATION ELONGATION FACTOR KOW-LIKE DOMAIN-CONTAINING PROTEIN"/>
    <property type="match status" value="1"/>
</dbReference>
<dbReference type="Pfam" id="PF01132">
    <property type="entry name" value="EFP"/>
    <property type="match status" value="1"/>
</dbReference>
<dbReference type="Pfam" id="PF08207">
    <property type="entry name" value="EFP_N"/>
    <property type="match status" value="1"/>
</dbReference>
<dbReference type="Pfam" id="PF09285">
    <property type="entry name" value="Elong-fact-P_C"/>
    <property type="match status" value="1"/>
</dbReference>
<dbReference type="PIRSF" id="PIRSF005901">
    <property type="entry name" value="EF-P"/>
    <property type="match status" value="1"/>
</dbReference>
<dbReference type="SMART" id="SM01185">
    <property type="entry name" value="EFP"/>
    <property type="match status" value="1"/>
</dbReference>
<dbReference type="SMART" id="SM00841">
    <property type="entry name" value="Elong-fact-P_C"/>
    <property type="match status" value="1"/>
</dbReference>
<dbReference type="SUPFAM" id="SSF50249">
    <property type="entry name" value="Nucleic acid-binding proteins"/>
    <property type="match status" value="2"/>
</dbReference>
<dbReference type="SUPFAM" id="SSF50104">
    <property type="entry name" value="Translation proteins SH3-like domain"/>
    <property type="match status" value="1"/>
</dbReference>
<dbReference type="PROSITE" id="PS01275">
    <property type="entry name" value="EFP"/>
    <property type="match status" value="1"/>
</dbReference>
<evidence type="ECO:0000255" key="1">
    <source>
        <dbReference type="HAMAP-Rule" id="MF_00646"/>
    </source>
</evidence>
<keyword id="KW-1185">Reference proteome</keyword>
<protein>
    <recommendedName>
        <fullName evidence="1">Elongation factor P-like protein</fullName>
    </recommendedName>
</protein>
<feature type="chain" id="PRO_1000147435" description="Elongation factor P-like protein">
    <location>
        <begin position="1"/>
        <end position="190"/>
    </location>
</feature>
<accession>B7UFI8</accession>
<reference key="1">
    <citation type="journal article" date="2009" name="J. Bacteriol.">
        <title>Complete genome sequence and comparative genome analysis of enteropathogenic Escherichia coli O127:H6 strain E2348/69.</title>
        <authorList>
            <person name="Iguchi A."/>
            <person name="Thomson N.R."/>
            <person name="Ogura Y."/>
            <person name="Saunders D."/>
            <person name="Ooka T."/>
            <person name="Henderson I.R."/>
            <person name="Harris D."/>
            <person name="Asadulghani M."/>
            <person name="Kurokawa K."/>
            <person name="Dean P."/>
            <person name="Kenny B."/>
            <person name="Quail M.A."/>
            <person name="Thurston S."/>
            <person name="Dougan G."/>
            <person name="Hayashi T."/>
            <person name="Parkhill J."/>
            <person name="Frankel G."/>
        </authorList>
    </citation>
    <scope>NUCLEOTIDE SEQUENCE [LARGE SCALE GENOMIC DNA]</scope>
    <source>
        <strain>E2348/69 / EPEC</strain>
    </source>
</reference>
<comment type="similarity">
    <text evidence="1">Belongs to the elongation factor P family.</text>
</comment>
<organism>
    <name type="scientific">Escherichia coli O127:H6 (strain E2348/69 / EPEC)</name>
    <dbReference type="NCBI Taxonomy" id="574521"/>
    <lineage>
        <taxon>Bacteria</taxon>
        <taxon>Pseudomonadati</taxon>
        <taxon>Pseudomonadota</taxon>
        <taxon>Gammaproteobacteria</taxon>
        <taxon>Enterobacterales</taxon>
        <taxon>Enterobacteriaceae</taxon>
        <taxon>Escherichia</taxon>
    </lineage>
</organism>
<sequence>MPRANEIKKGMVLNYNGKLLLVKDIDIQSPTARGAATLYKMRFSDVRTGLKVEERFKGDDIVDTVTLTRRYVDFSYVDGNEYVFMDKEDYTPYTFTKDQIEEELLFMPEGGMPDMQVLTWDGQLLALELPQTVDLEIVETAPGIKGASASARNKPATLSTGLVIQVPEYLSPGEKIRIHIEERRYMGRAD</sequence>
<gene>
    <name evidence="1" type="primary">yeiP</name>
    <name type="ordered locus">E2348C_2318</name>
</gene>
<name>EFPL_ECO27</name>